<sequence length="549" mass="62182">MASYAPFIKPYVQYNEHGWGPCEIPDMDVPYQPFCKSDRLGKICDWTVAMQEKKFSNKYASSFGNNSQYAYFHEDDDSTFHLVDTSGSRALKPYQRGRFRPNVRNNARVKGRSGRGPGMLGVAGSMAGGGTTSGSTKYGKGRESRRNQGRRFARNAPSRLRESSVLVRPNWVSLEEIEFPRLLKLALPNIKEGQDIVTCGSLEYYDKLYDRINLRNERPLLKMDRIVHTVTTTDDPVIRRLSKTMGNVFATDEILATIMCCTRSNYSWDVVIEKLGTKVFLDKRDNAQFDLLTVNETSLEPPMDEEGSINSAHSLAMEATLINHNFGQQVLRVGEQEPRFKFGEPNPFEEPGVELACLGYRYRQWQLGNDLVLVARCKHNGVIQGPNGEVQFLSIKALNEWDSKAANSVEWRQKLDTQRGAVLASELRNNACKLARWTVEAVLAGSDQLKLGYVSRVTPRDHLRHVILGTQQFKPQEFATQINLNMDNAWGILRCLVDIVMKQPDGKYLIVKDPNKPMVRLYDIPENSFDSDAEDEENSSEPFANSLDN</sequence>
<keyword id="KW-0963">Cytoplasm</keyword>
<keyword id="KW-0396">Initiation factor</keyword>
<keyword id="KW-0648">Protein biosynthesis</keyword>
<keyword id="KW-1185">Reference proteome</keyword>
<keyword id="KW-0694">RNA-binding</keyword>
<name>EI3D2_DROAN</name>
<gene>
    <name evidence="2" type="primary">eIF3d2</name>
    <name evidence="2" type="synonym">eIF3-S7-2</name>
    <name type="ORF">GF17742</name>
</gene>
<evidence type="ECO:0000250" key="1">
    <source>
        <dbReference type="UniProtKB" id="K7IM66"/>
    </source>
</evidence>
<evidence type="ECO:0000255" key="2">
    <source>
        <dbReference type="HAMAP-Rule" id="MF_03003"/>
    </source>
</evidence>
<evidence type="ECO:0000256" key="3">
    <source>
        <dbReference type="SAM" id="MobiDB-lite"/>
    </source>
</evidence>
<reference key="1">
    <citation type="journal article" date="2007" name="Nature">
        <title>Evolution of genes and genomes on the Drosophila phylogeny.</title>
        <authorList>
            <consortium name="Drosophila 12 genomes consortium"/>
        </authorList>
    </citation>
    <scope>NUCLEOTIDE SEQUENCE [LARGE SCALE GENOMIC DNA]</scope>
    <source>
        <strain>Tucson 14024-0371.13</strain>
    </source>
</reference>
<feature type="chain" id="PRO_0000364143" description="Eukaryotic translation initiation factor 3 subunit D-2">
    <location>
        <begin position="1"/>
        <end position="549"/>
    </location>
</feature>
<feature type="region of interest" description="Disordered" evidence="3">
    <location>
        <begin position="107"/>
        <end position="157"/>
    </location>
</feature>
<feature type="region of interest" description="RNA gate" evidence="1">
    <location>
        <begin position="288"/>
        <end position="302"/>
    </location>
</feature>
<feature type="region of interest" description="Disordered" evidence="3">
    <location>
        <begin position="527"/>
        <end position="549"/>
    </location>
</feature>
<feature type="compositionally biased region" description="Gly residues" evidence="3">
    <location>
        <begin position="114"/>
        <end position="132"/>
    </location>
</feature>
<feature type="compositionally biased region" description="Acidic residues" evidence="3">
    <location>
        <begin position="529"/>
        <end position="539"/>
    </location>
</feature>
<dbReference type="EMBL" id="CH902617">
    <property type="protein sequence ID" value="EDV41975.1"/>
    <property type="molecule type" value="Genomic_DNA"/>
</dbReference>
<dbReference type="SMR" id="B3LZN3"/>
<dbReference type="FunCoup" id="B3LZN3">
    <property type="interactions" value="1846"/>
</dbReference>
<dbReference type="STRING" id="7217.B3LZN3"/>
<dbReference type="EnsemblMetazoa" id="FBtr0122442">
    <property type="protein sequence ID" value="FBpp0120934"/>
    <property type="gene ID" value="FBgn0094760"/>
</dbReference>
<dbReference type="EnsemblMetazoa" id="XM_001953357.4">
    <property type="protein sequence ID" value="XP_001953392.1"/>
    <property type="gene ID" value="LOC6500525"/>
</dbReference>
<dbReference type="GeneID" id="6500525"/>
<dbReference type="KEGG" id="dan:6500525"/>
<dbReference type="CTD" id="41475"/>
<dbReference type="eggNOG" id="KOG2479">
    <property type="taxonomic scope" value="Eukaryota"/>
</dbReference>
<dbReference type="HOGENOM" id="CLU_024521_2_0_1"/>
<dbReference type="InParanoid" id="B3LZN3"/>
<dbReference type="OMA" id="CKHNGVI"/>
<dbReference type="OrthoDB" id="16538at2759"/>
<dbReference type="PhylomeDB" id="B3LZN3"/>
<dbReference type="Proteomes" id="UP000007801">
    <property type="component" value="Unassembled WGS sequence"/>
</dbReference>
<dbReference type="GO" id="GO:0016282">
    <property type="term" value="C:eukaryotic 43S preinitiation complex"/>
    <property type="evidence" value="ECO:0007669"/>
    <property type="project" value="UniProtKB-UniRule"/>
</dbReference>
<dbReference type="GO" id="GO:0033290">
    <property type="term" value="C:eukaryotic 48S preinitiation complex"/>
    <property type="evidence" value="ECO:0007669"/>
    <property type="project" value="UniProtKB-UniRule"/>
</dbReference>
<dbReference type="GO" id="GO:0005852">
    <property type="term" value="C:eukaryotic translation initiation factor 3 complex"/>
    <property type="evidence" value="ECO:0000250"/>
    <property type="project" value="UniProtKB"/>
</dbReference>
<dbReference type="GO" id="GO:0098808">
    <property type="term" value="F:mRNA cap binding"/>
    <property type="evidence" value="ECO:0007669"/>
    <property type="project" value="UniProtKB-UniRule"/>
</dbReference>
<dbReference type="GO" id="GO:0003743">
    <property type="term" value="F:translation initiation factor activity"/>
    <property type="evidence" value="ECO:0000250"/>
    <property type="project" value="UniProtKB"/>
</dbReference>
<dbReference type="GO" id="GO:0002191">
    <property type="term" value="P:cap-dependent translational initiation"/>
    <property type="evidence" value="ECO:0007669"/>
    <property type="project" value="UniProtKB-UniRule"/>
</dbReference>
<dbReference type="GO" id="GO:0001732">
    <property type="term" value="P:formation of cytoplasmic translation initiation complex"/>
    <property type="evidence" value="ECO:0007669"/>
    <property type="project" value="UniProtKB-UniRule"/>
</dbReference>
<dbReference type="GO" id="GO:0006446">
    <property type="term" value="P:regulation of translational initiation"/>
    <property type="evidence" value="ECO:0000250"/>
    <property type="project" value="UniProtKB"/>
</dbReference>
<dbReference type="HAMAP" id="MF_03003">
    <property type="entry name" value="eIF3d"/>
    <property type="match status" value="1"/>
</dbReference>
<dbReference type="InterPro" id="IPR007783">
    <property type="entry name" value="eIF3d"/>
</dbReference>
<dbReference type="PANTHER" id="PTHR12399">
    <property type="entry name" value="EUKARYOTIC TRANSLATION INITIATION FACTOR 3 SUBUNIT 7"/>
    <property type="match status" value="1"/>
</dbReference>
<dbReference type="PANTHER" id="PTHR12399:SF0">
    <property type="entry name" value="EUKARYOTIC TRANSLATION INITIATION FACTOR 3 SUBUNIT D"/>
    <property type="match status" value="1"/>
</dbReference>
<dbReference type="Pfam" id="PF05091">
    <property type="entry name" value="eIF-3_zeta"/>
    <property type="match status" value="1"/>
</dbReference>
<dbReference type="PIRSF" id="PIRSF016281">
    <property type="entry name" value="EIF-3_zeta"/>
    <property type="match status" value="1"/>
</dbReference>
<proteinExistence type="inferred from homology"/>
<comment type="function">
    <text evidence="2">mRNA cap-binding component of the eukaryotic translation initiation factor 3 (eIF-3) complex, which is involved in protein synthesis of a specialized repertoire of mRNAs and, together with other initiation factors, stimulates binding of mRNA and methionyl-tRNAi to the 40S ribosome. The eIF-3 complex specifically targets and initiates translation of a subset of mRNAs involved in cell proliferation. In the eIF-3 complex, eif3d specifically recognizes and binds the 7-methylguanosine cap of a subset of mRNAs.</text>
</comment>
<comment type="subunit">
    <text evidence="2">Component of the eukaryotic translation initiation factor 3 (eIF-3) complex. The eIF-3 complex interacts with pix.</text>
</comment>
<comment type="subcellular location">
    <subcellularLocation>
        <location evidence="2">Cytoplasm</location>
    </subcellularLocation>
</comment>
<comment type="domain">
    <text evidence="2">The RNA gate region regulates mRNA cap recognition to prevent promiscuous mRNA-binding before assembly of eif3d into the full eukaryotic translation initiation factor 3 (eIF-3) complex.</text>
</comment>
<comment type="similarity">
    <text evidence="2">Belongs to the eIF-3 subunit D family.</text>
</comment>
<accession>B3LZN3</accession>
<organism>
    <name type="scientific">Drosophila ananassae</name>
    <name type="common">Fruit fly</name>
    <dbReference type="NCBI Taxonomy" id="7217"/>
    <lineage>
        <taxon>Eukaryota</taxon>
        <taxon>Metazoa</taxon>
        <taxon>Ecdysozoa</taxon>
        <taxon>Arthropoda</taxon>
        <taxon>Hexapoda</taxon>
        <taxon>Insecta</taxon>
        <taxon>Pterygota</taxon>
        <taxon>Neoptera</taxon>
        <taxon>Endopterygota</taxon>
        <taxon>Diptera</taxon>
        <taxon>Brachycera</taxon>
        <taxon>Muscomorpha</taxon>
        <taxon>Ephydroidea</taxon>
        <taxon>Drosophilidae</taxon>
        <taxon>Drosophila</taxon>
        <taxon>Sophophora</taxon>
    </lineage>
</organism>
<protein>
    <recommendedName>
        <fullName evidence="2">Eukaryotic translation initiation factor 3 subunit D-2</fullName>
        <shortName evidence="2">eIF3d-2</shortName>
    </recommendedName>
    <alternativeName>
        <fullName evidence="2">Eukaryotic translation initiation factor 3 subunit 7-2</fullName>
    </alternativeName>
</protein>